<name>STP4_YEAST</name>
<evidence type="ECO:0000255" key="1">
    <source>
        <dbReference type="PROSITE-ProRule" id="PRU00042"/>
    </source>
</evidence>
<evidence type="ECO:0000256" key="2">
    <source>
        <dbReference type="SAM" id="MobiDB-lite"/>
    </source>
</evidence>
<evidence type="ECO:0000269" key="3">
    <source>
    </source>
</evidence>
<evidence type="ECO:0000269" key="4">
    <source>
    </source>
</evidence>
<evidence type="ECO:0000305" key="5"/>
<evidence type="ECO:0007744" key="6">
    <source>
    </source>
</evidence>
<protein>
    <recommendedName>
        <fullName>Zinc finger protein STP4</fullName>
    </recommendedName>
</protein>
<proteinExistence type="evidence at protein level"/>
<gene>
    <name type="primary">STP4</name>
    <name type="ordered locus">YDL048C</name>
    <name type="ORF">D2690</name>
</gene>
<organism>
    <name type="scientific">Saccharomyces cerevisiae (strain ATCC 204508 / S288c)</name>
    <name type="common">Baker's yeast</name>
    <dbReference type="NCBI Taxonomy" id="559292"/>
    <lineage>
        <taxon>Eukaryota</taxon>
        <taxon>Fungi</taxon>
        <taxon>Dikarya</taxon>
        <taxon>Ascomycota</taxon>
        <taxon>Saccharomycotina</taxon>
        <taxon>Saccharomycetes</taxon>
        <taxon>Saccharomycetales</taxon>
        <taxon>Saccharomycetaceae</taxon>
        <taxon>Saccharomyces</taxon>
    </lineage>
</organism>
<reference key="1">
    <citation type="journal article" date="1997" name="Nature">
        <title>The nucleotide sequence of Saccharomyces cerevisiae chromosome IV.</title>
        <authorList>
            <person name="Jacq C."/>
            <person name="Alt-Moerbe J."/>
            <person name="Andre B."/>
            <person name="Arnold W."/>
            <person name="Bahr A."/>
            <person name="Ballesta J.P.G."/>
            <person name="Bargues M."/>
            <person name="Baron L."/>
            <person name="Becker A."/>
            <person name="Biteau N."/>
            <person name="Bloecker H."/>
            <person name="Blugeon C."/>
            <person name="Boskovic J."/>
            <person name="Brandt P."/>
            <person name="Brueckner M."/>
            <person name="Buitrago M.J."/>
            <person name="Coster F."/>
            <person name="Delaveau T."/>
            <person name="del Rey F."/>
            <person name="Dujon B."/>
            <person name="Eide L.G."/>
            <person name="Garcia-Cantalejo J.M."/>
            <person name="Goffeau A."/>
            <person name="Gomez-Peris A."/>
            <person name="Granotier C."/>
            <person name="Hanemann V."/>
            <person name="Hankeln T."/>
            <person name="Hoheisel J.D."/>
            <person name="Jaeger W."/>
            <person name="Jimenez A."/>
            <person name="Jonniaux J.-L."/>
            <person name="Kraemer C."/>
            <person name="Kuester H."/>
            <person name="Laamanen P."/>
            <person name="Legros Y."/>
            <person name="Louis E.J."/>
            <person name="Moeller-Rieker S."/>
            <person name="Monnet A."/>
            <person name="Moro M."/>
            <person name="Mueller-Auer S."/>
            <person name="Nussbaumer B."/>
            <person name="Paricio N."/>
            <person name="Paulin L."/>
            <person name="Perea J."/>
            <person name="Perez-Alonso M."/>
            <person name="Perez-Ortin J.E."/>
            <person name="Pohl T.M."/>
            <person name="Prydz H."/>
            <person name="Purnelle B."/>
            <person name="Rasmussen S.W."/>
            <person name="Remacha M.A."/>
            <person name="Revuelta J.L."/>
            <person name="Rieger M."/>
            <person name="Salom D."/>
            <person name="Saluz H.P."/>
            <person name="Saiz J.E."/>
            <person name="Saren A.-M."/>
            <person name="Schaefer M."/>
            <person name="Scharfe M."/>
            <person name="Schmidt E.R."/>
            <person name="Schneider C."/>
            <person name="Scholler P."/>
            <person name="Schwarz S."/>
            <person name="Soler-Mira A."/>
            <person name="Urrestarazu L.A."/>
            <person name="Verhasselt P."/>
            <person name="Vissers S."/>
            <person name="Voet M."/>
            <person name="Volckaert G."/>
            <person name="Wagner G."/>
            <person name="Wambutt R."/>
            <person name="Wedler E."/>
            <person name="Wedler H."/>
            <person name="Woelfl S."/>
            <person name="Harris D.E."/>
            <person name="Bowman S."/>
            <person name="Brown D."/>
            <person name="Churcher C.M."/>
            <person name="Connor R."/>
            <person name="Dedman K."/>
            <person name="Gentles S."/>
            <person name="Hamlin N."/>
            <person name="Hunt S."/>
            <person name="Jones L."/>
            <person name="McDonald S."/>
            <person name="Murphy L.D."/>
            <person name="Niblett D."/>
            <person name="Odell C."/>
            <person name="Oliver K."/>
            <person name="Rajandream M.A."/>
            <person name="Richards C."/>
            <person name="Shore L."/>
            <person name="Walsh S.V."/>
            <person name="Barrell B.G."/>
            <person name="Dietrich F.S."/>
            <person name="Mulligan J.T."/>
            <person name="Allen E."/>
            <person name="Araujo R."/>
            <person name="Aviles E."/>
            <person name="Berno A."/>
            <person name="Carpenter J."/>
            <person name="Chen E."/>
            <person name="Cherry J.M."/>
            <person name="Chung E."/>
            <person name="Duncan M."/>
            <person name="Hunicke-Smith S."/>
            <person name="Hyman R.W."/>
            <person name="Komp C."/>
            <person name="Lashkari D."/>
            <person name="Lew H."/>
            <person name="Lin D."/>
            <person name="Mosedale D."/>
            <person name="Nakahara K."/>
            <person name="Namath A."/>
            <person name="Oefner P."/>
            <person name="Oh C."/>
            <person name="Petel F.X."/>
            <person name="Roberts D."/>
            <person name="Schramm S."/>
            <person name="Schroeder M."/>
            <person name="Shogren T."/>
            <person name="Shroff N."/>
            <person name="Winant A."/>
            <person name="Yelton M.A."/>
            <person name="Botstein D."/>
            <person name="Davis R.W."/>
            <person name="Johnston M."/>
            <person name="Andrews S."/>
            <person name="Brinkman R."/>
            <person name="Cooper J."/>
            <person name="Ding H."/>
            <person name="Du Z."/>
            <person name="Favello A."/>
            <person name="Fulton L."/>
            <person name="Gattung S."/>
            <person name="Greco T."/>
            <person name="Hallsworth K."/>
            <person name="Hawkins J."/>
            <person name="Hillier L.W."/>
            <person name="Jier M."/>
            <person name="Johnson D."/>
            <person name="Johnston L."/>
            <person name="Kirsten J."/>
            <person name="Kucaba T."/>
            <person name="Langston Y."/>
            <person name="Latreille P."/>
            <person name="Le T."/>
            <person name="Mardis E."/>
            <person name="Menezes S."/>
            <person name="Miller N."/>
            <person name="Nhan M."/>
            <person name="Pauley A."/>
            <person name="Peluso D."/>
            <person name="Rifkin L."/>
            <person name="Riles L."/>
            <person name="Taich A."/>
            <person name="Trevaskis E."/>
            <person name="Vignati D."/>
            <person name="Wilcox L."/>
            <person name="Wohldman P."/>
            <person name="Vaudin M."/>
            <person name="Wilson R."/>
            <person name="Waterston R."/>
            <person name="Albermann K."/>
            <person name="Hani J."/>
            <person name="Heumann K."/>
            <person name="Kleine K."/>
            <person name="Mewes H.-W."/>
            <person name="Zollner A."/>
            <person name="Zaccaria P."/>
        </authorList>
    </citation>
    <scope>NUCLEOTIDE SEQUENCE [LARGE SCALE GENOMIC DNA]</scope>
    <source>
        <strain>ATCC 204508 / S288c</strain>
    </source>
</reference>
<reference key="2">
    <citation type="journal article" date="2014" name="G3 (Bethesda)">
        <title>The reference genome sequence of Saccharomyces cerevisiae: Then and now.</title>
        <authorList>
            <person name="Engel S.R."/>
            <person name="Dietrich F.S."/>
            <person name="Fisk D.G."/>
            <person name="Binkley G."/>
            <person name="Balakrishnan R."/>
            <person name="Costanzo M.C."/>
            <person name="Dwight S.S."/>
            <person name="Hitz B.C."/>
            <person name="Karra K."/>
            <person name="Nash R.S."/>
            <person name="Weng S."/>
            <person name="Wong E.D."/>
            <person name="Lloyd P."/>
            <person name="Skrzypek M.S."/>
            <person name="Miyasato S.R."/>
            <person name="Simison M."/>
            <person name="Cherry J.M."/>
        </authorList>
    </citation>
    <scope>GENOME REANNOTATION</scope>
    <source>
        <strain>ATCC 204508 / S288c</strain>
    </source>
</reference>
<reference key="3">
    <citation type="journal article" date="1997" name="Yeast">
        <title>The sequence of a 36.7 kb segment on the left arm of chromosome IV from Saccharomyces cerevisiae reveals 20 non-overlapping open reading frames (ORFs) including SIT4, FAD1, NAM1, RNA11, SIR2, NAT1, PRP9, ACT2 and MPS1 and 11 new ORFs.</title>
        <authorList>
            <person name="Saren A.-M."/>
            <person name="Laamanen P."/>
            <person name="Lejarcegui J.B."/>
            <person name="Paulin L."/>
        </authorList>
    </citation>
    <scope>NUCLEOTIDE SEQUENCE [GENOMIC DNA] OF 1-170</scope>
    <source>
        <strain>ATCC 204508 / S288c</strain>
    </source>
</reference>
<reference key="4">
    <citation type="journal article" date="2003" name="Nature">
        <title>Global analysis of protein localization in budding yeast.</title>
        <authorList>
            <person name="Huh W.-K."/>
            <person name="Falvo J.V."/>
            <person name="Gerke L.C."/>
            <person name="Carroll A.S."/>
            <person name="Howson R.W."/>
            <person name="Weissman J.S."/>
            <person name="O'Shea E.K."/>
        </authorList>
    </citation>
    <scope>SUBCELLULAR LOCATION [LARGE SCALE ANALYSIS]</scope>
</reference>
<reference key="5">
    <citation type="journal article" date="2003" name="Nature">
        <title>Global analysis of protein expression in yeast.</title>
        <authorList>
            <person name="Ghaemmaghami S."/>
            <person name="Huh W.-K."/>
            <person name="Bower K."/>
            <person name="Howson R.W."/>
            <person name="Belle A."/>
            <person name="Dephoure N."/>
            <person name="O'Shea E.K."/>
            <person name="Weissman J.S."/>
        </authorList>
    </citation>
    <scope>LEVEL OF PROTEIN EXPRESSION [LARGE SCALE ANALYSIS]</scope>
</reference>
<reference key="6">
    <citation type="journal article" date="2009" name="Science">
        <title>Global analysis of Cdk1 substrate phosphorylation sites provides insights into evolution.</title>
        <authorList>
            <person name="Holt L.J."/>
            <person name="Tuch B.B."/>
            <person name="Villen J."/>
            <person name="Johnson A.D."/>
            <person name="Gygi S.P."/>
            <person name="Morgan D.O."/>
        </authorList>
    </citation>
    <scope>PHOSPHORYLATION [LARGE SCALE ANALYSIS] AT SER-153 AND SER-155</scope>
    <scope>IDENTIFICATION BY MASS SPECTROMETRY [LARGE SCALE ANALYSIS]</scope>
</reference>
<dbReference type="EMBL" id="Z74095">
    <property type="protein sequence ID" value="CAA98608.1"/>
    <property type="molecule type" value="Genomic_DNA"/>
</dbReference>
<dbReference type="EMBL" id="Z74096">
    <property type="protein sequence ID" value="CAA98610.1"/>
    <property type="molecule type" value="Genomic_DNA"/>
</dbReference>
<dbReference type="EMBL" id="Z71781">
    <property type="protein sequence ID" value="CAA96441.1"/>
    <property type="status" value="ALT_INIT"/>
    <property type="molecule type" value="Genomic_DNA"/>
</dbReference>
<dbReference type="EMBL" id="BK006938">
    <property type="protein sequence ID" value="DAA11807.1"/>
    <property type="molecule type" value="Genomic_DNA"/>
</dbReference>
<dbReference type="PIR" id="S78573">
    <property type="entry name" value="S67581"/>
</dbReference>
<dbReference type="RefSeq" id="NP_010235.1">
    <property type="nucleotide sequence ID" value="NM_001180107.1"/>
</dbReference>
<dbReference type="BioGRID" id="32010">
    <property type="interactions" value="54"/>
</dbReference>
<dbReference type="FunCoup" id="Q07351">
    <property type="interactions" value="271"/>
</dbReference>
<dbReference type="IntAct" id="Q07351">
    <property type="interactions" value="3"/>
</dbReference>
<dbReference type="MINT" id="Q07351"/>
<dbReference type="STRING" id="4932.YDL048C"/>
<dbReference type="iPTMnet" id="Q07351"/>
<dbReference type="PaxDb" id="4932-YDL048C"/>
<dbReference type="PeptideAtlas" id="Q07351"/>
<dbReference type="EnsemblFungi" id="YDL048C_mRNA">
    <property type="protein sequence ID" value="YDL048C"/>
    <property type="gene ID" value="YDL048C"/>
</dbReference>
<dbReference type="GeneID" id="851512"/>
<dbReference type="KEGG" id="sce:YDL048C"/>
<dbReference type="AGR" id="SGD:S000002206"/>
<dbReference type="SGD" id="S000002206">
    <property type="gene designation" value="STP4"/>
</dbReference>
<dbReference type="VEuPathDB" id="FungiDB:YDL048C"/>
<dbReference type="eggNOG" id="KOG1721">
    <property type="taxonomic scope" value="Eukaryota"/>
</dbReference>
<dbReference type="GeneTree" id="ENSGT00940000176480"/>
<dbReference type="HOGENOM" id="CLU_035625_1_0_1"/>
<dbReference type="InParanoid" id="Q07351"/>
<dbReference type="OMA" id="MSHETMS"/>
<dbReference type="OrthoDB" id="10018191at2759"/>
<dbReference type="BioCyc" id="YEAST:G3O-29467-MONOMER"/>
<dbReference type="BioGRID-ORCS" id="851512">
    <property type="hits" value="5 hits in 13 CRISPR screens"/>
</dbReference>
<dbReference type="PRO" id="PR:Q07351"/>
<dbReference type="Proteomes" id="UP000002311">
    <property type="component" value="Chromosome IV"/>
</dbReference>
<dbReference type="RNAct" id="Q07351">
    <property type="molecule type" value="protein"/>
</dbReference>
<dbReference type="GO" id="GO:0005737">
    <property type="term" value="C:cytoplasm"/>
    <property type="evidence" value="ECO:0007005"/>
    <property type="project" value="SGD"/>
</dbReference>
<dbReference type="GO" id="GO:0005739">
    <property type="term" value="C:mitochondrion"/>
    <property type="evidence" value="ECO:0007005"/>
    <property type="project" value="SGD"/>
</dbReference>
<dbReference type="GO" id="GO:0005634">
    <property type="term" value="C:nucleus"/>
    <property type="evidence" value="ECO:0007005"/>
    <property type="project" value="SGD"/>
</dbReference>
<dbReference type="GO" id="GO:0043565">
    <property type="term" value="F:sequence-specific DNA binding"/>
    <property type="evidence" value="ECO:0007005"/>
    <property type="project" value="SGD"/>
</dbReference>
<dbReference type="GO" id="GO:0008270">
    <property type="term" value="F:zinc ion binding"/>
    <property type="evidence" value="ECO:0007669"/>
    <property type="project" value="UniProtKB-KW"/>
</dbReference>
<dbReference type="FunFam" id="3.30.160.60:FF:001951">
    <property type="entry name" value="Stp4p"/>
    <property type="match status" value="1"/>
</dbReference>
<dbReference type="Gene3D" id="3.30.160.60">
    <property type="entry name" value="Classic Zinc Finger"/>
    <property type="match status" value="1"/>
</dbReference>
<dbReference type="InterPro" id="IPR036236">
    <property type="entry name" value="Znf_C2H2_sf"/>
</dbReference>
<dbReference type="InterPro" id="IPR013087">
    <property type="entry name" value="Znf_C2H2_type"/>
</dbReference>
<dbReference type="Pfam" id="PF13894">
    <property type="entry name" value="zf-C2H2_4"/>
    <property type="match status" value="1"/>
</dbReference>
<dbReference type="SMART" id="SM00355">
    <property type="entry name" value="ZnF_C2H2"/>
    <property type="match status" value="3"/>
</dbReference>
<dbReference type="SUPFAM" id="SSF57667">
    <property type="entry name" value="beta-beta-alpha zinc fingers"/>
    <property type="match status" value="1"/>
</dbReference>
<dbReference type="PROSITE" id="PS00028">
    <property type="entry name" value="ZINC_FINGER_C2H2_1"/>
    <property type="match status" value="1"/>
</dbReference>
<dbReference type="PROSITE" id="PS50157">
    <property type="entry name" value="ZINC_FINGER_C2H2_2"/>
    <property type="match status" value="1"/>
</dbReference>
<feature type="chain" id="PRO_0000270566" description="Zinc finger protein STP4">
    <location>
        <begin position="1"/>
        <end position="490"/>
    </location>
</feature>
<feature type="zinc finger region" description="C2H2-type" evidence="1">
    <location>
        <begin position="304"/>
        <end position="326"/>
    </location>
</feature>
<feature type="region of interest" description="Disordered" evidence="2">
    <location>
        <begin position="1"/>
        <end position="85"/>
    </location>
</feature>
<feature type="region of interest" description="Disordered" evidence="2">
    <location>
        <begin position="231"/>
        <end position="273"/>
    </location>
</feature>
<feature type="region of interest" description="Disordered" evidence="2">
    <location>
        <begin position="338"/>
        <end position="375"/>
    </location>
</feature>
<feature type="compositionally biased region" description="Low complexity" evidence="2">
    <location>
        <begin position="1"/>
        <end position="16"/>
    </location>
</feature>
<feature type="compositionally biased region" description="Low complexity" evidence="2">
    <location>
        <begin position="52"/>
        <end position="73"/>
    </location>
</feature>
<feature type="compositionally biased region" description="Low complexity" evidence="2">
    <location>
        <begin position="231"/>
        <end position="247"/>
    </location>
</feature>
<feature type="compositionally biased region" description="Polar residues" evidence="2">
    <location>
        <begin position="250"/>
        <end position="265"/>
    </location>
</feature>
<feature type="modified residue" description="Phosphoserine" evidence="6">
    <location>
        <position position="153"/>
    </location>
</feature>
<feature type="modified residue" description="Phosphoserine" evidence="6">
    <location>
        <position position="155"/>
    </location>
</feature>
<sequence length="490" mass="54367">MLVSSSFASSIDSVMSHETMSLRRNPPFIDTPEKMPNPTASPNGTIHHLIDPSLPLLSSTTSSSRSTLSSTLNSPPPPPLTTSYSSYNSSACQSITSSPTDNTALAHNSKCYFPHSLSPTPLSSNSSSHVILPPISSFTNLITVAEREFNGRSNSLHANFTSPVPRTVLDHHRHELTFCNPNNTTGFKTITPSPPTQHQSILPTAVDNVPRSKSVSSLPVSGFPPLIVKQQQQQQLNSSSSASALPSIHSPLTNEHTSRYSSSLKDSAKITKQRKKKECPICHNFYANLSTHKSTHLTPEDRPHKCPICQRGFARNNDLIRHKKRHWKDEFMQIYARESDNNSGADDQDDTARTSANNDSDDSNDKLAASSSSEETKLLKKNQLKSLYKIKGAFKCPYNSTLINLDMEVYPHKSRSLYFEPINCHQTGVFSRCDTFKNHLKALHFEYPPKTKKEDRGVVPGKCKHCGLQFPNVDVWLNKHVGKGCGYSYH</sequence>
<accession>Q07351</accession>
<accession>D6VRU7</accession>
<accession>P87336</accession>
<accession>Q05422</accession>
<accession>Q7LGT2</accession>
<accession>Q7LH06</accession>
<comment type="subcellular location">
    <subcellularLocation>
        <location evidence="3">Cytoplasm</location>
    </subcellularLocation>
    <subcellularLocation>
        <location evidence="3">Mitochondrion</location>
    </subcellularLocation>
    <subcellularLocation>
        <location evidence="3">Nucleus</location>
    </subcellularLocation>
</comment>
<comment type="miscellaneous">
    <text evidence="4">Present with 623 molecules/cell in log phase SD medium.</text>
</comment>
<comment type="sequence caution" evidence="5">
    <conflict type="erroneous initiation">
        <sequence resource="EMBL-CDS" id="CAA96441"/>
    </conflict>
</comment>
<keyword id="KW-0963">Cytoplasm</keyword>
<keyword id="KW-0479">Metal-binding</keyword>
<keyword id="KW-0496">Mitochondrion</keyword>
<keyword id="KW-0539">Nucleus</keyword>
<keyword id="KW-0597">Phosphoprotein</keyword>
<keyword id="KW-1185">Reference proteome</keyword>
<keyword id="KW-0862">Zinc</keyword>
<keyword id="KW-0863">Zinc-finger</keyword>